<protein>
    <recommendedName>
        <fullName>Guanylyl cyclase-activating protein 3</fullName>
        <shortName>GCAP 3</shortName>
    </recommendedName>
    <alternativeName>
        <fullName>Guanylate cyclase activator 1C</fullName>
    </alternativeName>
</protein>
<evidence type="ECO:0000255" key="1"/>
<evidence type="ECO:0000255" key="2">
    <source>
        <dbReference type="PROSITE-ProRule" id="PRU00448"/>
    </source>
</evidence>
<evidence type="ECO:0000256" key="3">
    <source>
        <dbReference type="SAM" id="MobiDB-lite"/>
    </source>
</evidence>
<evidence type="ECO:0000269" key="4">
    <source>
    </source>
</evidence>
<evidence type="ECO:0000269" key="5">
    <source>
    </source>
</evidence>
<evidence type="ECO:0000303" key="6">
    <source>
    </source>
</evidence>
<evidence type="ECO:0007829" key="7">
    <source>
        <dbReference type="PDB" id="2GGZ"/>
    </source>
</evidence>
<comment type="function">
    <text>Stimulates guanylyl cyclase 1 (GC1) and GC2 when free calcium ions concentration is low and inhibits guanylyl cyclases when free calcium ions concentration is elevated. This Ca(2+)-sensitive regulation of guanylyl cyclase (GC) is a key event in recovery of the dark state of rod photoreceptors following light exposure.</text>
</comment>
<comment type="interaction">
    <interactant intactId="EBI-23668738">
        <id>O95843</id>
    </interactant>
    <interactant intactId="EBI-740220">
        <id>O14964</id>
        <label>HGS</label>
    </interactant>
    <organismsDiffer>false</organismsDiffer>
    <experiments>3</experiments>
</comment>
<comment type="interaction">
    <interactant intactId="EBI-23668738">
        <id>O95843</id>
    </interactant>
    <interactant intactId="EBI-11974061">
        <id>Q9UIG4</id>
        <label>PSORS1C2</label>
    </interactant>
    <organismsDiffer>false</organismsDiffer>
    <experiments>3</experiments>
</comment>
<comment type="alternative products">
    <event type="alternative splicing"/>
    <isoform>
        <id>O95843-1</id>
        <name>1</name>
        <sequence type="displayed"/>
    </isoform>
    <isoform>
        <id>O95843-2</id>
        <name>2</name>
        <sequence type="described" ref="VSP_000736"/>
    </isoform>
</comment>
<comment type="tissue specificity">
    <text>Retina.</text>
</comment>
<comment type="domain">
    <text evidence="5">Binds three calcium ions (via EF-hand 2, 3 and 4).</text>
</comment>
<dbReference type="EMBL" id="AF110001">
    <property type="protein sequence ID" value="AAD19943.1"/>
    <property type="molecule type" value="Genomic_DNA"/>
</dbReference>
<dbReference type="EMBL" id="AF109998">
    <property type="protein sequence ID" value="AAD19943.1"/>
    <property type="status" value="JOINED"/>
    <property type="molecule type" value="Genomic_DNA"/>
</dbReference>
<dbReference type="EMBL" id="AF109999">
    <property type="protein sequence ID" value="AAD19943.1"/>
    <property type="status" value="JOINED"/>
    <property type="molecule type" value="Genomic_DNA"/>
</dbReference>
<dbReference type="EMBL" id="AF110000">
    <property type="protein sequence ID" value="AAD19943.1"/>
    <property type="status" value="JOINED"/>
    <property type="molecule type" value="Genomic_DNA"/>
</dbReference>
<dbReference type="EMBL" id="AF110002">
    <property type="protein sequence ID" value="AAD19944.1"/>
    <property type="molecule type" value="mRNA"/>
</dbReference>
<dbReference type="EMBL" id="AF110003">
    <property type="protein sequence ID" value="AAD19945.1"/>
    <property type="molecule type" value="mRNA"/>
</dbReference>
<dbReference type="CCDS" id="CCDS2954.1">
    <molecule id="O95843-1"/>
</dbReference>
<dbReference type="CCDS" id="CCDS87118.1">
    <molecule id="O95843-2"/>
</dbReference>
<dbReference type="RefSeq" id="NP_005450.3">
    <molecule id="O95843-1"/>
    <property type="nucleotide sequence ID" value="NM_005459.3"/>
</dbReference>
<dbReference type="PDB" id="2GGZ">
    <property type="method" value="X-ray"/>
    <property type="resolution" value="3.00 A"/>
    <property type="chains" value="A/B=1-209"/>
</dbReference>
<dbReference type="PDBsum" id="2GGZ"/>
<dbReference type="SMR" id="O95843"/>
<dbReference type="BioGRID" id="114985">
    <property type="interactions" value="3"/>
</dbReference>
<dbReference type="FunCoup" id="O95843">
    <property type="interactions" value="27"/>
</dbReference>
<dbReference type="IntAct" id="O95843">
    <property type="interactions" value="3"/>
</dbReference>
<dbReference type="STRING" id="9606.ENSP00000261047"/>
<dbReference type="iPTMnet" id="O95843"/>
<dbReference type="BioMuta" id="GUCA1C"/>
<dbReference type="PaxDb" id="9606-ENSP00000261047"/>
<dbReference type="Antibodypedia" id="32403">
    <property type="antibodies" value="141 antibodies from 18 providers"/>
</dbReference>
<dbReference type="DNASU" id="9626"/>
<dbReference type="Ensembl" id="ENST00000261047.8">
    <molecule id="O95843-1"/>
    <property type="protein sequence ID" value="ENSP00000261047.3"/>
    <property type="gene ID" value="ENSG00000138472.11"/>
</dbReference>
<dbReference type="GeneID" id="9626"/>
<dbReference type="KEGG" id="hsa:9626"/>
<dbReference type="MANE-Select" id="ENST00000261047.8">
    <property type="protein sequence ID" value="ENSP00000261047.3"/>
    <property type="RefSeq nucleotide sequence ID" value="NM_005459.4"/>
    <property type="RefSeq protein sequence ID" value="NP_005450.3"/>
</dbReference>
<dbReference type="UCSC" id="uc003dxj.3">
    <molecule id="O95843-1"/>
    <property type="organism name" value="human"/>
</dbReference>
<dbReference type="AGR" id="HGNC:4680"/>
<dbReference type="CTD" id="9626"/>
<dbReference type="DisGeNET" id="9626"/>
<dbReference type="GeneCards" id="GUCA1C"/>
<dbReference type="HGNC" id="HGNC:4680">
    <property type="gene designation" value="GUCA1C"/>
</dbReference>
<dbReference type="HPA" id="ENSG00000138472">
    <property type="expression patterns" value="Tissue enriched (retina)"/>
</dbReference>
<dbReference type="MIM" id="605128">
    <property type="type" value="gene"/>
</dbReference>
<dbReference type="neXtProt" id="NX_O95843"/>
<dbReference type="OpenTargets" id="ENSG00000138472"/>
<dbReference type="PharmGKB" id="PA29064"/>
<dbReference type="VEuPathDB" id="HostDB:ENSG00000138472"/>
<dbReference type="eggNOG" id="KOG0044">
    <property type="taxonomic scope" value="Eukaryota"/>
</dbReference>
<dbReference type="GeneTree" id="ENSGT00940000162847"/>
<dbReference type="HOGENOM" id="CLU_072366_4_1_1"/>
<dbReference type="InParanoid" id="O95843"/>
<dbReference type="OMA" id="MHHYYSK"/>
<dbReference type="OrthoDB" id="191686at2759"/>
<dbReference type="PAN-GO" id="O95843">
    <property type="GO annotations" value="2 GO annotations based on evolutionary models"/>
</dbReference>
<dbReference type="PhylomeDB" id="O95843"/>
<dbReference type="TreeFam" id="TF333971"/>
<dbReference type="PathwayCommons" id="O95843"/>
<dbReference type="Reactome" id="R-HSA-2514859">
    <property type="pathway name" value="Inactivation, recovery and regulation of the phototransduction cascade"/>
</dbReference>
<dbReference type="SignaLink" id="O95843"/>
<dbReference type="BioGRID-ORCS" id="9626">
    <property type="hits" value="11 hits in 1138 CRISPR screens"/>
</dbReference>
<dbReference type="EvolutionaryTrace" id="O95843"/>
<dbReference type="GenomeRNAi" id="9626"/>
<dbReference type="Pharos" id="O95843">
    <property type="development level" value="Tdark"/>
</dbReference>
<dbReference type="PRO" id="PR:O95843"/>
<dbReference type="Proteomes" id="UP000005640">
    <property type="component" value="Chromosome 3"/>
</dbReference>
<dbReference type="RNAct" id="O95843">
    <property type="molecule type" value="protein"/>
</dbReference>
<dbReference type="Bgee" id="ENSG00000138472">
    <property type="expression patterns" value="Expressed in body of pancreas and 59 other cell types or tissues"/>
</dbReference>
<dbReference type="ExpressionAtlas" id="O95843">
    <property type="expression patterns" value="baseline and differential"/>
</dbReference>
<dbReference type="GO" id="GO:0097381">
    <property type="term" value="C:photoreceptor disc membrane"/>
    <property type="evidence" value="ECO:0000304"/>
    <property type="project" value="Reactome"/>
</dbReference>
<dbReference type="GO" id="GO:0005509">
    <property type="term" value="F:calcium ion binding"/>
    <property type="evidence" value="ECO:0000318"/>
    <property type="project" value="GO_Central"/>
</dbReference>
<dbReference type="GO" id="GO:0008048">
    <property type="term" value="F:calcium sensitive guanylate cyclase activator activity"/>
    <property type="evidence" value="ECO:0000318"/>
    <property type="project" value="GO_Central"/>
</dbReference>
<dbReference type="GO" id="GO:0009966">
    <property type="term" value="P:regulation of signal transduction"/>
    <property type="evidence" value="ECO:0000318"/>
    <property type="project" value="GO_Central"/>
</dbReference>
<dbReference type="GO" id="GO:0007165">
    <property type="term" value="P:signal transduction"/>
    <property type="evidence" value="ECO:0000304"/>
    <property type="project" value="ProtInc"/>
</dbReference>
<dbReference type="GO" id="GO:0007601">
    <property type="term" value="P:visual perception"/>
    <property type="evidence" value="ECO:0000304"/>
    <property type="project" value="ProtInc"/>
</dbReference>
<dbReference type="CDD" id="cd00051">
    <property type="entry name" value="EFh"/>
    <property type="match status" value="2"/>
</dbReference>
<dbReference type="FunFam" id="1.10.238.10:FF:000052">
    <property type="entry name" value="Guanylate cyclase activator 1A"/>
    <property type="match status" value="1"/>
</dbReference>
<dbReference type="Gene3D" id="1.10.238.10">
    <property type="entry name" value="EF-hand"/>
    <property type="match status" value="2"/>
</dbReference>
<dbReference type="InterPro" id="IPR011992">
    <property type="entry name" value="EF-hand-dom_pair"/>
</dbReference>
<dbReference type="InterPro" id="IPR018247">
    <property type="entry name" value="EF_Hand_1_Ca_BS"/>
</dbReference>
<dbReference type="InterPro" id="IPR002048">
    <property type="entry name" value="EF_hand_dom"/>
</dbReference>
<dbReference type="InterPro" id="IPR028846">
    <property type="entry name" value="Recoverin"/>
</dbReference>
<dbReference type="PANTHER" id="PTHR23055">
    <property type="entry name" value="CALCIUM BINDING PROTEINS"/>
    <property type="match status" value="1"/>
</dbReference>
<dbReference type="PANTHER" id="PTHR23055:SF80">
    <property type="entry name" value="GUANYLYL CYCLASE-ACTIVATING PROTEIN 3"/>
    <property type="match status" value="1"/>
</dbReference>
<dbReference type="Pfam" id="PF13202">
    <property type="entry name" value="EF-hand_5"/>
    <property type="match status" value="1"/>
</dbReference>
<dbReference type="Pfam" id="PF13499">
    <property type="entry name" value="EF-hand_7"/>
    <property type="match status" value="1"/>
</dbReference>
<dbReference type="PRINTS" id="PR00450">
    <property type="entry name" value="RECOVERIN"/>
</dbReference>
<dbReference type="SMART" id="SM00054">
    <property type="entry name" value="EFh"/>
    <property type="match status" value="3"/>
</dbReference>
<dbReference type="SUPFAM" id="SSF47473">
    <property type="entry name" value="EF-hand"/>
    <property type="match status" value="1"/>
</dbReference>
<dbReference type="PROSITE" id="PS00018">
    <property type="entry name" value="EF_HAND_1"/>
    <property type="match status" value="3"/>
</dbReference>
<dbReference type="PROSITE" id="PS50222">
    <property type="entry name" value="EF_HAND_2"/>
    <property type="match status" value="3"/>
</dbReference>
<name>GUC1C_HUMAN</name>
<feature type="initiator methionine" description="Removed">
    <location>
        <position position="1"/>
    </location>
</feature>
<feature type="chain" id="PRO_0000073812" description="Guanylyl cyclase-activating protein 3">
    <location>
        <begin position="2"/>
        <end position="209"/>
    </location>
</feature>
<feature type="domain" description="EF-hand 1" evidence="5">
    <location>
        <begin position="15"/>
        <end position="50"/>
    </location>
</feature>
<feature type="domain" description="EF-hand 2" evidence="2 5">
    <location>
        <begin position="52"/>
        <end position="87"/>
    </location>
</feature>
<feature type="domain" description="EF-hand 3" evidence="2 5">
    <location>
        <begin position="88"/>
        <end position="123"/>
    </location>
</feature>
<feature type="domain" description="EF-hand 4" evidence="2">
    <location>
        <begin position="130"/>
        <end position="165"/>
    </location>
</feature>
<feature type="region of interest" description="Disordered" evidence="3">
    <location>
        <begin position="187"/>
        <end position="209"/>
    </location>
</feature>
<feature type="binding site" evidence="2 5">
    <location>
        <position position="65"/>
    </location>
    <ligand>
        <name>Ca(2+)</name>
        <dbReference type="ChEBI" id="CHEBI:29108"/>
        <label>1</label>
    </ligand>
</feature>
<feature type="binding site" evidence="2 5">
    <location>
        <position position="67"/>
    </location>
    <ligand>
        <name>Ca(2+)</name>
        <dbReference type="ChEBI" id="CHEBI:29108"/>
        <label>1</label>
    </ligand>
</feature>
<feature type="binding site" evidence="2 5">
    <location>
        <position position="69"/>
    </location>
    <ligand>
        <name>Ca(2+)</name>
        <dbReference type="ChEBI" id="CHEBI:29108"/>
        <label>1</label>
    </ligand>
</feature>
<feature type="binding site" evidence="2 5">
    <location>
        <position position="76"/>
    </location>
    <ligand>
        <name>Ca(2+)</name>
        <dbReference type="ChEBI" id="CHEBI:29108"/>
        <label>1</label>
    </ligand>
</feature>
<feature type="binding site" evidence="2 5">
    <location>
        <position position="101"/>
    </location>
    <ligand>
        <name>Ca(2+)</name>
        <dbReference type="ChEBI" id="CHEBI:29108"/>
        <label>2</label>
    </ligand>
</feature>
<feature type="binding site" evidence="2 5">
    <location>
        <position position="103"/>
    </location>
    <ligand>
        <name>Ca(2+)</name>
        <dbReference type="ChEBI" id="CHEBI:29108"/>
        <label>2</label>
    </ligand>
</feature>
<feature type="binding site" evidence="2 5">
    <location>
        <position position="105"/>
    </location>
    <ligand>
        <name>Ca(2+)</name>
        <dbReference type="ChEBI" id="CHEBI:29108"/>
        <label>2</label>
    </ligand>
</feature>
<feature type="binding site" evidence="2 5">
    <location>
        <position position="107"/>
    </location>
    <ligand>
        <name>Ca(2+)</name>
        <dbReference type="ChEBI" id="CHEBI:29108"/>
        <label>2</label>
    </ligand>
</feature>
<feature type="binding site" evidence="2 5">
    <location>
        <position position="112"/>
    </location>
    <ligand>
        <name>Ca(2+)</name>
        <dbReference type="ChEBI" id="CHEBI:29108"/>
        <label>2</label>
    </ligand>
</feature>
<feature type="binding site" evidence="2 5">
    <location>
        <position position="143"/>
    </location>
    <ligand>
        <name>Ca(2+)</name>
        <dbReference type="ChEBI" id="CHEBI:29108"/>
        <label>3</label>
    </ligand>
</feature>
<feature type="binding site" evidence="2 5">
    <location>
        <position position="145"/>
    </location>
    <ligand>
        <name>Ca(2+)</name>
        <dbReference type="ChEBI" id="CHEBI:29108"/>
        <label>3</label>
    </ligand>
</feature>
<feature type="binding site" evidence="2 5">
    <location>
        <position position="147"/>
    </location>
    <ligand>
        <name>Ca(2+)</name>
        <dbReference type="ChEBI" id="CHEBI:29108"/>
        <label>3</label>
    </ligand>
</feature>
<feature type="binding site" evidence="2 5">
    <location>
        <position position="149"/>
    </location>
    <ligand>
        <name>Ca(2+)</name>
        <dbReference type="ChEBI" id="CHEBI:29108"/>
        <label>3</label>
    </ligand>
</feature>
<feature type="binding site" evidence="2 5">
    <location>
        <position position="154"/>
    </location>
    <ligand>
        <name>Ca(2+)</name>
        <dbReference type="ChEBI" id="CHEBI:29108"/>
        <label>3</label>
    </ligand>
</feature>
<feature type="modified residue" description="Deamidated asparagine" evidence="1">
    <location>
        <position position="3"/>
    </location>
</feature>
<feature type="lipid moiety-binding region" description="N-myristoyl glycine" evidence="4">
    <location>
        <position position="2"/>
    </location>
</feature>
<feature type="splice variant" id="VSP_000736" description="In isoform 2." evidence="6">
    <original>ELTLEEFINGMAKDQDLLEIVYKSFDFSNVLRVICNGKQPDMETDSSKSPDKAGLGKVKMK</original>
    <variation>NGATLYWITFPTKGIDFRRIYQWHGKRSGSPGDCSQELRLLQCAESNL</variation>
    <location>
        <begin position="149"/>
        <end position="209"/>
    </location>
</feature>
<feature type="sequence variant" id="VAR_055632" description="In dbSNP:rs2715687." evidence="4">
    <original>V</original>
    <variation>I</variation>
    <location>
        <position position="72"/>
    </location>
</feature>
<feature type="sequence variant" id="VAR_055633" description="In dbSNP:rs6804162.">
    <original>M</original>
    <variation>V</variation>
    <location>
        <position position="85"/>
    </location>
</feature>
<feature type="sequence variant" id="VAR_055634" description="In dbSNP:rs11917716.">
    <original>A</original>
    <variation>V</variation>
    <location>
        <position position="119"/>
    </location>
</feature>
<feature type="sequence variant" id="VAR_055635" description="In dbSNP:rs16854916.">
    <original>M</original>
    <variation>V</variation>
    <location>
        <position position="159"/>
    </location>
</feature>
<feature type="helix" evidence="7">
    <location>
        <begin position="26"/>
        <end position="29"/>
    </location>
</feature>
<feature type="strand" evidence="7">
    <location>
        <begin position="33"/>
        <end position="36"/>
    </location>
</feature>
<feature type="helix" evidence="7">
    <location>
        <begin position="37"/>
        <end position="43"/>
    </location>
</feature>
<feature type="helix" evidence="7">
    <location>
        <begin position="51"/>
        <end position="64"/>
    </location>
</feature>
<feature type="strand" evidence="7">
    <location>
        <begin position="69"/>
        <end position="73"/>
    </location>
</feature>
<feature type="helix" evidence="7">
    <location>
        <begin position="74"/>
        <end position="84"/>
    </location>
</feature>
<feature type="helix" evidence="7">
    <location>
        <begin position="89"/>
        <end position="100"/>
    </location>
</feature>
<feature type="strand" evidence="7">
    <location>
        <begin position="105"/>
        <end position="108"/>
    </location>
</feature>
<feature type="helix" evidence="7">
    <location>
        <begin position="110"/>
        <end position="120"/>
    </location>
</feature>
<feature type="helix" evidence="7">
    <location>
        <begin position="131"/>
        <end position="142"/>
    </location>
</feature>
<feature type="strand" evidence="7">
    <location>
        <begin position="147"/>
        <end position="150"/>
    </location>
</feature>
<feature type="helix" evidence="7">
    <location>
        <begin position="152"/>
        <end position="160"/>
    </location>
</feature>
<feature type="turn" evidence="7">
    <location>
        <begin position="161"/>
        <end position="165"/>
    </location>
</feature>
<feature type="helix" evidence="7">
    <location>
        <begin position="166"/>
        <end position="172"/>
    </location>
</feature>
<feature type="helix" evidence="7">
    <location>
        <begin position="177"/>
        <end position="185"/>
    </location>
</feature>
<gene>
    <name type="primary">GUCA1C</name>
    <name type="synonym">GCAP3</name>
</gene>
<reference key="1">
    <citation type="journal article" date="1999" name="J. Biol. Chem.">
        <title>Molecular characterization of a third member of the guanylyl cyclase-activating protein subfamily.</title>
        <authorList>
            <person name="Haeseleer F."/>
            <person name="Sokal I."/>
            <person name="Li N."/>
            <person name="Pettenati M.J."/>
            <person name="Rao N."/>
            <person name="Bronson J.D."/>
            <person name="Wechter R."/>
            <person name="Baehr W."/>
            <person name="Palczewski K."/>
        </authorList>
    </citation>
    <scope>NUCLEOTIDE SEQUENCE [GENOMIC DNA / MRNA] (ISOFORMS 1 AND 2)</scope>
    <scope>CHARACTERIZATION</scope>
    <scope>MYRISTOYLATION AT GLY-2</scope>
    <scope>VARIANT ILE-72</scope>
    <source>
        <tissue>Retina</tissue>
    </source>
</reference>
<reference key="2">
    <citation type="journal article" date="2006" name="J. Mol. Biol.">
        <title>The crystal structure of GCAP3 suggests molecular mechanism of GCAP-linked cone dystrophies.</title>
        <authorList>
            <person name="Stephen R."/>
            <person name="Palczewski K."/>
            <person name="Sousa M.C."/>
        </authorList>
    </citation>
    <scope>X-RAY CRYSTALLOGRAPHY (3.0 ANGSTROMS) IN COMPLEX WITH CALCIUM IONS</scope>
</reference>
<accession>O95843</accession>
<accession>O95844</accession>
<accession>Q9UNM0</accession>
<sequence length="209" mass="23822">MGNGKSIAGDQKAVPTQETHVWYRTFMMEYPSGLQTLHEFKTLLGLQGLNQKANKHIDQVYNTFDTNKDGFVDFLEFIAAVNLIMQEKMEQKLKWYFKLYDADGNGSIDKNELLDMFMAVQALNGQQTLSPEEFINLVFHKIDINNDGELTLEEFINGMAKDQDLLEIVYKSFDFSNVLRVICNGKQPDMETDSSKSPDKAGLGKVKMK</sequence>
<keyword id="KW-0002">3D-structure</keyword>
<keyword id="KW-0025">Alternative splicing</keyword>
<keyword id="KW-0106">Calcium</keyword>
<keyword id="KW-0449">Lipoprotein</keyword>
<keyword id="KW-0479">Metal-binding</keyword>
<keyword id="KW-0519">Myristate</keyword>
<keyword id="KW-1185">Reference proteome</keyword>
<keyword id="KW-0677">Repeat</keyword>
<proteinExistence type="evidence at protein level"/>
<organism>
    <name type="scientific">Homo sapiens</name>
    <name type="common">Human</name>
    <dbReference type="NCBI Taxonomy" id="9606"/>
    <lineage>
        <taxon>Eukaryota</taxon>
        <taxon>Metazoa</taxon>
        <taxon>Chordata</taxon>
        <taxon>Craniata</taxon>
        <taxon>Vertebrata</taxon>
        <taxon>Euteleostomi</taxon>
        <taxon>Mammalia</taxon>
        <taxon>Eutheria</taxon>
        <taxon>Euarchontoglires</taxon>
        <taxon>Primates</taxon>
        <taxon>Haplorrhini</taxon>
        <taxon>Catarrhini</taxon>
        <taxon>Hominidae</taxon>
        <taxon>Homo</taxon>
    </lineage>
</organism>